<gene>
    <name type="ordered locus">Mevan_0526</name>
</gene>
<dbReference type="EC" id="2.3.3.10" evidence="1"/>
<dbReference type="EMBL" id="CP000742">
    <property type="protein sequence ID" value="ABR54433.1"/>
    <property type="molecule type" value="Genomic_DNA"/>
</dbReference>
<dbReference type="RefSeq" id="WP_011972336.1">
    <property type="nucleotide sequence ID" value="NC_009634.1"/>
</dbReference>
<dbReference type="SMR" id="A6UPL1"/>
<dbReference type="STRING" id="406327.Mevan_0526"/>
<dbReference type="GeneID" id="5325807"/>
<dbReference type="KEGG" id="mvn:Mevan_0526"/>
<dbReference type="eggNOG" id="arCOG01767">
    <property type="taxonomic scope" value="Archaea"/>
</dbReference>
<dbReference type="HOGENOM" id="CLU_039592_7_0_2"/>
<dbReference type="OrthoDB" id="5812at2157"/>
<dbReference type="UniPathway" id="UPA00058">
    <property type="reaction ID" value="UER00102"/>
</dbReference>
<dbReference type="Proteomes" id="UP000001107">
    <property type="component" value="Chromosome"/>
</dbReference>
<dbReference type="GO" id="GO:0003985">
    <property type="term" value="F:acetyl-CoA C-acetyltransferase activity"/>
    <property type="evidence" value="ECO:0007669"/>
    <property type="project" value="UniProtKB-UniRule"/>
</dbReference>
<dbReference type="GO" id="GO:0004421">
    <property type="term" value="F:hydroxymethylglutaryl-CoA synthase activity"/>
    <property type="evidence" value="ECO:0007669"/>
    <property type="project" value="InterPro"/>
</dbReference>
<dbReference type="GO" id="GO:0010142">
    <property type="term" value="P:farnesyl diphosphate biosynthetic process, mevalonate pathway"/>
    <property type="evidence" value="ECO:0007669"/>
    <property type="project" value="TreeGrafter"/>
</dbReference>
<dbReference type="GO" id="GO:0019287">
    <property type="term" value="P:isopentenyl diphosphate biosynthetic process, mevalonate pathway"/>
    <property type="evidence" value="ECO:0007669"/>
    <property type="project" value="UniProtKB-UniRule"/>
</dbReference>
<dbReference type="CDD" id="cd00827">
    <property type="entry name" value="init_cond_enzymes"/>
    <property type="match status" value="1"/>
</dbReference>
<dbReference type="FunFam" id="3.40.47.10:FF:000046">
    <property type="entry name" value="UPF0219 protein M1627_1703"/>
    <property type="match status" value="1"/>
</dbReference>
<dbReference type="Gene3D" id="3.40.47.10">
    <property type="match status" value="1"/>
</dbReference>
<dbReference type="HAMAP" id="MF_01409">
    <property type="entry name" value="HMG_CoA_synth_arch"/>
    <property type="match status" value="1"/>
</dbReference>
<dbReference type="InterPro" id="IPR013747">
    <property type="entry name" value="ACP_syn_III_C"/>
</dbReference>
<dbReference type="InterPro" id="IPR004656">
    <property type="entry name" value="HMG_CoA_Synthase"/>
</dbReference>
<dbReference type="InterPro" id="IPR016039">
    <property type="entry name" value="Thiolase-like"/>
</dbReference>
<dbReference type="NCBIfam" id="TIGR00748">
    <property type="entry name" value="HMG_CoA_syn_Arc"/>
    <property type="match status" value="1"/>
</dbReference>
<dbReference type="NCBIfam" id="NF003274">
    <property type="entry name" value="PRK04262.1"/>
    <property type="match status" value="1"/>
</dbReference>
<dbReference type="PANTHER" id="PTHR43323">
    <property type="entry name" value="3-HYDROXY-3-METHYLGLUTARYL COENZYME A SYNTHASE"/>
    <property type="match status" value="1"/>
</dbReference>
<dbReference type="PANTHER" id="PTHR43323:SF2">
    <property type="entry name" value="HYDROXYMETHYLGLUTARYL-COA SYNTHASE"/>
    <property type="match status" value="1"/>
</dbReference>
<dbReference type="Pfam" id="PF08541">
    <property type="entry name" value="ACP_syn_III_C"/>
    <property type="match status" value="1"/>
</dbReference>
<dbReference type="SUPFAM" id="SSF53901">
    <property type="entry name" value="Thiolase-like"/>
    <property type="match status" value="2"/>
</dbReference>
<keyword id="KW-0012">Acyltransferase</keyword>
<keyword id="KW-0414">Isoprene biosynthesis</keyword>
<keyword id="KW-0808">Transferase</keyword>
<feature type="chain" id="PRO_1000068446" description="Hydroxymethylglutaryl-CoA synthase">
    <location>
        <begin position="1"/>
        <end position="349"/>
    </location>
</feature>
<feature type="active site" description="Proton donor/acceptor" evidence="1">
    <location>
        <position position="82"/>
    </location>
</feature>
<feature type="active site" description="Acyl-thioester intermediate" evidence="1">
    <location>
        <position position="114"/>
    </location>
</feature>
<feature type="active site" description="Proton donor/acceptor" evidence="1">
    <location>
        <position position="238"/>
    </location>
</feature>
<feature type="binding site" evidence="1">
    <location>
        <position position="30"/>
    </location>
    <ligand>
        <name>(3S)-3-hydroxy-3-methylglutaryl-CoA</name>
        <dbReference type="ChEBI" id="CHEBI:43074"/>
    </ligand>
</feature>
<feature type="binding site" evidence="1">
    <location>
        <position position="31"/>
    </location>
    <ligand>
        <name>(3S)-3-hydroxy-3-methylglutaryl-CoA</name>
        <dbReference type="ChEBI" id="CHEBI:43074"/>
    </ligand>
</feature>
<feature type="binding site" evidence="1">
    <location>
        <position position="114"/>
    </location>
    <ligand>
        <name>(3S)-3-hydroxy-3-methylglutaryl-CoA</name>
        <dbReference type="ChEBI" id="CHEBI:43074"/>
    </ligand>
</feature>
<feature type="binding site" evidence="1">
    <location>
        <position position="155"/>
    </location>
    <ligand>
        <name>(3S)-3-hydroxy-3-methylglutaryl-CoA</name>
        <dbReference type="ChEBI" id="CHEBI:43074"/>
    </ligand>
</feature>
<feature type="binding site" evidence="1">
    <location>
        <position position="203"/>
    </location>
    <ligand>
        <name>CoA</name>
        <dbReference type="ChEBI" id="CHEBI:57287"/>
        <note>ligand shared with acetoacetyl-CoA thiolase</note>
    </ligand>
</feature>
<feature type="binding site" evidence="1">
    <location>
        <position position="205"/>
    </location>
    <ligand>
        <name>(3S)-3-hydroxy-3-methylglutaryl-CoA</name>
        <dbReference type="ChEBI" id="CHEBI:43074"/>
    </ligand>
</feature>
<feature type="binding site" evidence="1">
    <location>
        <position position="238"/>
    </location>
    <ligand>
        <name>(3S)-3-hydroxy-3-methylglutaryl-CoA</name>
        <dbReference type="ChEBI" id="CHEBI:43074"/>
    </ligand>
</feature>
<feature type="binding site" evidence="1">
    <location>
        <position position="243"/>
    </location>
    <ligand>
        <name>CoA</name>
        <dbReference type="ChEBI" id="CHEBI:57287"/>
        <note>ligand shared with acetoacetyl-CoA thiolase</note>
    </ligand>
</feature>
<feature type="binding site" evidence="1">
    <location>
        <position position="270"/>
    </location>
    <ligand>
        <name>(3S)-3-hydroxy-3-methylglutaryl-CoA</name>
        <dbReference type="ChEBI" id="CHEBI:43074"/>
    </ligand>
</feature>
<feature type="binding site" evidence="1">
    <location>
        <position position="300"/>
    </location>
    <ligand>
        <name>(3S)-3-hydroxy-3-methylglutaryl-CoA</name>
        <dbReference type="ChEBI" id="CHEBI:43074"/>
    </ligand>
</feature>
<organism>
    <name type="scientific">Methanococcus vannielii (strain ATCC 35089 / DSM 1224 / JCM 13029 / OCM 148 / SB)</name>
    <dbReference type="NCBI Taxonomy" id="406327"/>
    <lineage>
        <taxon>Archaea</taxon>
        <taxon>Methanobacteriati</taxon>
        <taxon>Methanobacteriota</taxon>
        <taxon>Methanomada group</taxon>
        <taxon>Methanococci</taxon>
        <taxon>Methanococcales</taxon>
        <taxon>Methanococcaceae</taxon>
        <taxon>Methanococcus</taxon>
    </lineage>
</organism>
<accession>A6UPL1</accession>
<evidence type="ECO:0000255" key="1">
    <source>
        <dbReference type="HAMAP-Rule" id="MF_01409"/>
    </source>
</evidence>
<comment type="function">
    <text evidence="1">Catalyzes the condensation of acetyl-CoA with acetoacetyl-CoA to form 3-hydroxy-3-methylglutaryl-CoA (HMG-CoA). Functions in the mevalonate (MVA) pathway leading to isopentenyl diphosphate (IPP), a key precursor for the biosynthesis of isoprenoid compounds that are building blocks of archaeal membrane lipids.</text>
</comment>
<comment type="catalytic activity">
    <reaction evidence="1">
        <text>acetoacetyl-CoA + acetyl-CoA + H2O = (3S)-3-hydroxy-3-methylglutaryl-CoA + CoA + H(+)</text>
        <dbReference type="Rhea" id="RHEA:10188"/>
        <dbReference type="ChEBI" id="CHEBI:15377"/>
        <dbReference type="ChEBI" id="CHEBI:15378"/>
        <dbReference type="ChEBI" id="CHEBI:43074"/>
        <dbReference type="ChEBI" id="CHEBI:57286"/>
        <dbReference type="ChEBI" id="CHEBI:57287"/>
        <dbReference type="ChEBI" id="CHEBI:57288"/>
        <dbReference type="EC" id="2.3.3.10"/>
    </reaction>
    <physiologicalReaction direction="left-to-right" evidence="1">
        <dbReference type="Rhea" id="RHEA:10189"/>
    </physiologicalReaction>
</comment>
<comment type="pathway">
    <text evidence="1">Metabolic intermediate biosynthesis; (R)-mevalonate biosynthesis; (R)-mevalonate from acetyl-CoA: step 2/3.</text>
</comment>
<comment type="subunit">
    <text evidence="1">Interacts with acetoacetyl-CoA thiolase that catalyzes the precedent step in the pathway and with a DUF35 protein. The acetoacetyl-CoA thiolase/HMG-CoA synthase complex channels the intermediate via a fused CoA-binding site, which allows for efficient coupling of the endergonic thiolase reaction with the exergonic HMGCS reaction.</text>
</comment>
<comment type="similarity">
    <text evidence="1">Belongs to the thiolase-like superfamily. Archaeal HMG-CoA synthase family.</text>
</comment>
<reference key="1">
    <citation type="submission" date="2007-06" db="EMBL/GenBank/DDBJ databases">
        <title>Complete sequence of Methanococcus vannielii SB.</title>
        <authorList>
            <consortium name="US DOE Joint Genome Institute"/>
            <person name="Copeland A."/>
            <person name="Lucas S."/>
            <person name="Lapidus A."/>
            <person name="Barry K."/>
            <person name="Glavina del Rio T."/>
            <person name="Dalin E."/>
            <person name="Tice H."/>
            <person name="Pitluck S."/>
            <person name="Chain P."/>
            <person name="Malfatti S."/>
            <person name="Shin M."/>
            <person name="Vergez L."/>
            <person name="Schmutz J."/>
            <person name="Larimer F."/>
            <person name="Land M."/>
            <person name="Hauser L."/>
            <person name="Kyrpides N."/>
            <person name="Anderson I."/>
            <person name="Sieprawska-Lupa M."/>
            <person name="Whitman W.B."/>
            <person name="Richardson P."/>
        </authorList>
    </citation>
    <scope>NUCLEOTIDE SEQUENCE [LARGE SCALE GENOMIC DNA]</scope>
    <source>
        <strain>ATCC 35089 / DSM 1224 / JCM 13029 / OCM 148 / SB</strain>
    </source>
</reference>
<proteinExistence type="inferred from homology"/>
<protein>
    <recommendedName>
        <fullName evidence="1">Hydroxymethylglutaryl-CoA synthase</fullName>
        <shortName evidence="1">HMG-CoA synthase</shortName>
        <shortName evidence="1">HMGCS</shortName>
        <ecNumber evidence="1">2.3.3.10</ecNumber>
    </recommendedName>
</protein>
<sequence>MKEVGIVGYGSDLPKYRIKAEEIAKAWGKDAEAIKKGLVVNEKSVPGPDEDSATIAVQAARRALSRSGINPKNIGAVYVGSESHPYAVKPTSGIVAEAVCTSPEVTAADLEFACKAGTAGIQMCMGLVSSGMMDYAMAVGVDTAQGAPGDALEYTAAAGGAAYIIGGKKEELIAKFNGTYSYTTDTPDFWRREHEHYPKHGGRFTGEPAYFRHVLSAAKGMMEKMDTTTKDYDYCVFHQPNGKFYLSAAKQLGFNENQYRYGLLTPYLGNTYSGAVPLGLSNILDHSKTGDRIFVVSYGSGAGSDAFDITVTDRISEVINKAVTTEELLSRKKYIDYAVYLKYRGKIRM</sequence>
<name>HMGCS_METVS</name>